<evidence type="ECO:0000255" key="1">
    <source>
        <dbReference type="HAMAP-Rule" id="MF_01346"/>
    </source>
</evidence>
<sequence length="511" mass="54696">MQLNPSEISELIKSRIQGLGDTAEIRNQGTVISVSDGICRIHGLSDVMQGEMLEFPGNTFGLALNLERDSVGAVILGEYEHISEGDTVKCTGRILEVPIGPELCGRVVNALGQPIDGKGPINTKLTTPIEKIAPGVIARQSVDQPMQTGIKAIDAMVPIGRGQRELIIGDRQTGKTAVAIDAIINQKGQGVTCIYVAIGQKASSIKNIVRALEQHGAMEYTIVVAATASESAAMQFVSAYSGCAMGEYFRDRGEDALIVYDDLSKQAVAYRQVSLLLRRPPGREAFPGDVFYLHSRLLERAARVNADYVEAFTKGAVKGKTGSLTALPIIETQAGDVSAFVPTNVISITDGQIFLETSLFNSGVRPAINAGISVSRVGGAAQTKVIKGLSGGIRTDLAQYRELAAFAQFASDLDASTRKQLDRGARVTELLKQAQYAPLSTSLMAVSLFAVNKGYFDDLEVKQVLAFESGLHGFMKSSHAALLQKIEDTKKLEKDDEAVLAAAIADFKKSF</sequence>
<dbReference type="EC" id="7.1.2.2" evidence="1"/>
<dbReference type="EMBL" id="CP000269">
    <property type="protein sequence ID" value="ABR88569.1"/>
    <property type="molecule type" value="Genomic_DNA"/>
</dbReference>
<dbReference type="RefSeq" id="WP_012081465.1">
    <property type="nucleotide sequence ID" value="NC_009659.1"/>
</dbReference>
<dbReference type="SMR" id="A6T472"/>
<dbReference type="STRING" id="375286.mma_3629"/>
<dbReference type="KEGG" id="mms:mma_3629"/>
<dbReference type="eggNOG" id="COG0056">
    <property type="taxonomic scope" value="Bacteria"/>
</dbReference>
<dbReference type="HOGENOM" id="CLU_010091_2_1_4"/>
<dbReference type="OrthoDB" id="9803053at2"/>
<dbReference type="Proteomes" id="UP000006388">
    <property type="component" value="Chromosome"/>
</dbReference>
<dbReference type="GO" id="GO:0005886">
    <property type="term" value="C:plasma membrane"/>
    <property type="evidence" value="ECO:0007669"/>
    <property type="project" value="UniProtKB-SubCell"/>
</dbReference>
<dbReference type="GO" id="GO:0045259">
    <property type="term" value="C:proton-transporting ATP synthase complex"/>
    <property type="evidence" value="ECO:0007669"/>
    <property type="project" value="UniProtKB-KW"/>
</dbReference>
<dbReference type="GO" id="GO:0043531">
    <property type="term" value="F:ADP binding"/>
    <property type="evidence" value="ECO:0007669"/>
    <property type="project" value="TreeGrafter"/>
</dbReference>
<dbReference type="GO" id="GO:0005524">
    <property type="term" value="F:ATP binding"/>
    <property type="evidence" value="ECO:0007669"/>
    <property type="project" value="UniProtKB-UniRule"/>
</dbReference>
<dbReference type="GO" id="GO:0046933">
    <property type="term" value="F:proton-transporting ATP synthase activity, rotational mechanism"/>
    <property type="evidence" value="ECO:0007669"/>
    <property type="project" value="UniProtKB-UniRule"/>
</dbReference>
<dbReference type="CDD" id="cd18113">
    <property type="entry name" value="ATP-synt_F1_alpha_C"/>
    <property type="match status" value="1"/>
</dbReference>
<dbReference type="CDD" id="cd18116">
    <property type="entry name" value="ATP-synt_F1_alpha_N"/>
    <property type="match status" value="1"/>
</dbReference>
<dbReference type="CDD" id="cd01132">
    <property type="entry name" value="F1-ATPase_alpha_CD"/>
    <property type="match status" value="1"/>
</dbReference>
<dbReference type="FunFam" id="1.20.150.20:FF:000001">
    <property type="entry name" value="ATP synthase subunit alpha"/>
    <property type="match status" value="1"/>
</dbReference>
<dbReference type="FunFam" id="2.40.30.20:FF:000001">
    <property type="entry name" value="ATP synthase subunit alpha"/>
    <property type="match status" value="1"/>
</dbReference>
<dbReference type="FunFam" id="3.40.50.300:FF:000002">
    <property type="entry name" value="ATP synthase subunit alpha"/>
    <property type="match status" value="1"/>
</dbReference>
<dbReference type="Gene3D" id="2.40.30.20">
    <property type="match status" value="1"/>
</dbReference>
<dbReference type="Gene3D" id="1.20.150.20">
    <property type="entry name" value="ATP synthase alpha/beta chain, C-terminal domain"/>
    <property type="match status" value="1"/>
</dbReference>
<dbReference type="Gene3D" id="3.40.50.300">
    <property type="entry name" value="P-loop containing nucleotide triphosphate hydrolases"/>
    <property type="match status" value="1"/>
</dbReference>
<dbReference type="HAMAP" id="MF_01346">
    <property type="entry name" value="ATP_synth_alpha_bact"/>
    <property type="match status" value="1"/>
</dbReference>
<dbReference type="InterPro" id="IPR023366">
    <property type="entry name" value="ATP_synth_asu-like_sf"/>
</dbReference>
<dbReference type="InterPro" id="IPR000793">
    <property type="entry name" value="ATP_synth_asu_C"/>
</dbReference>
<dbReference type="InterPro" id="IPR038376">
    <property type="entry name" value="ATP_synth_asu_C_sf"/>
</dbReference>
<dbReference type="InterPro" id="IPR033732">
    <property type="entry name" value="ATP_synth_F1_a_nt-bd_dom"/>
</dbReference>
<dbReference type="InterPro" id="IPR005294">
    <property type="entry name" value="ATP_synth_F1_asu"/>
</dbReference>
<dbReference type="InterPro" id="IPR020003">
    <property type="entry name" value="ATPase_a/bsu_AS"/>
</dbReference>
<dbReference type="InterPro" id="IPR004100">
    <property type="entry name" value="ATPase_F1/V1/A1_a/bsu_N"/>
</dbReference>
<dbReference type="InterPro" id="IPR036121">
    <property type="entry name" value="ATPase_F1/V1/A1_a/bsu_N_sf"/>
</dbReference>
<dbReference type="InterPro" id="IPR000194">
    <property type="entry name" value="ATPase_F1/V1/A1_a/bsu_nucl-bd"/>
</dbReference>
<dbReference type="InterPro" id="IPR027417">
    <property type="entry name" value="P-loop_NTPase"/>
</dbReference>
<dbReference type="NCBIfam" id="TIGR00962">
    <property type="entry name" value="atpA"/>
    <property type="match status" value="1"/>
</dbReference>
<dbReference type="NCBIfam" id="NF009884">
    <property type="entry name" value="PRK13343.1"/>
    <property type="match status" value="1"/>
</dbReference>
<dbReference type="PANTHER" id="PTHR48082">
    <property type="entry name" value="ATP SYNTHASE SUBUNIT ALPHA, MITOCHONDRIAL"/>
    <property type="match status" value="1"/>
</dbReference>
<dbReference type="PANTHER" id="PTHR48082:SF2">
    <property type="entry name" value="ATP SYNTHASE SUBUNIT ALPHA, MITOCHONDRIAL"/>
    <property type="match status" value="1"/>
</dbReference>
<dbReference type="Pfam" id="PF00006">
    <property type="entry name" value="ATP-synt_ab"/>
    <property type="match status" value="1"/>
</dbReference>
<dbReference type="Pfam" id="PF00306">
    <property type="entry name" value="ATP-synt_ab_C"/>
    <property type="match status" value="1"/>
</dbReference>
<dbReference type="Pfam" id="PF02874">
    <property type="entry name" value="ATP-synt_ab_N"/>
    <property type="match status" value="1"/>
</dbReference>
<dbReference type="PIRSF" id="PIRSF039088">
    <property type="entry name" value="F_ATPase_subunit_alpha"/>
    <property type="match status" value="1"/>
</dbReference>
<dbReference type="SUPFAM" id="SSF47917">
    <property type="entry name" value="C-terminal domain of alpha and beta subunits of F1 ATP synthase"/>
    <property type="match status" value="1"/>
</dbReference>
<dbReference type="SUPFAM" id="SSF50615">
    <property type="entry name" value="N-terminal domain of alpha and beta subunits of F1 ATP synthase"/>
    <property type="match status" value="1"/>
</dbReference>
<dbReference type="SUPFAM" id="SSF52540">
    <property type="entry name" value="P-loop containing nucleoside triphosphate hydrolases"/>
    <property type="match status" value="1"/>
</dbReference>
<dbReference type="PROSITE" id="PS00152">
    <property type="entry name" value="ATPASE_ALPHA_BETA"/>
    <property type="match status" value="1"/>
</dbReference>
<gene>
    <name evidence="1" type="primary">atpA</name>
    <name type="ordered locus">mma_3629</name>
</gene>
<reference key="1">
    <citation type="journal article" date="2007" name="PLoS Genet.">
        <title>Genome analysis of Minibacterium massiliensis highlights the convergent evolution of water-living bacteria.</title>
        <authorList>
            <person name="Audic S."/>
            <person name="Robert C."/>
            <person name="Campagna B."/>
            <person name="Parinello H."/>
            <person name="Claverie J.-M."/>
            <person name="Raoult D."/>
            <person name="Drancourt M."/>
        </authorList>
    </citation>
    <scope>NUCLEOTIDE SEQUENCE [LARGE SCALE GENOMIC DNA]</scope>
    <source>
        <strain>Marseille</strain>
    </source>
</reference>
<organism>
    <name type="scientific">Janthinobacterium sp. (strain Marseille)</name>
    <name type="common">Minibacterium massiliensis</name>
    <dbReference type="NCBI Taxonomy" id="375286"/>
    <lineage>
        <taxon>Bacteria</taxon>
        <taxon>Pseudomonadati</taxon>
        <taxon>Pseudomonadota</taxon>
        <taxon>Betaproteobacteria</taxon>
        <taxon>Burkholderiales</taxon>
        <taxon>Oxalobacteraceae</taxon>
        <taxon>Janthinobacterium</taxon>
    </lineage>
</organism>
<feature type="chain" id="PRO_1000055069" description="ATP synthase subunit alpha">
    <location>
        <begin position="1"/>
        <end position="511"/>
    </location>
</feature>
<feature type="binding site" evidence="1">
    <location>
        <begin position="169"/>
        <end position="176"/>
    </location>
    <ligand>
        <name>ATP</name>
        <dbReference type="ChEBI" id="CHEBI:30616"/>
    </ligand>
</feature>
<feature type="site" description="Required for activity" evidence="1">
    <location>
        <position position="373"/>
    </location>
</feature>
<proteinExistence type="inferred from homology"/>
<name>ATPA_JANMA</name>
<keyword id="KW-0066">ATP synthesis</keyword>
<keyword id="KW-0067">ATP-binding</keyword>
<keyword id="KW-0997">Cell inner membrane</keyword>
<keyword id="KW-1003">Cell membrane</keyword>
<keyword id="KW-0139">CF(1)</keyword>
<keyword id="KW-0375">Hydrogen ion transport</keyword>
<keyword id="KW-0406">Ion transport</keyword>
<keyword id="KW-0472">Membrane</keyword>
<keyword id="KW-0547">Nucleotide-binding</keyword>
<keyword id="KW-1278">Translocase</keyword>
<keyword id="KW-0813">Transport</keyword>
<accession>A6T472</accession>
<comment type="function">
    <text evidence="1">Produces ATP from ADP in the presence of a proton gradient across the membrane. The alpha chain is a regulatory subunit.</text>
</comment>
<comment type="catalytic activity">
    <reaction evidence="1">
        <text>ATP + H2O + 4 H(+)(in) = ADP + phosphate + 5 H(+)(out)</text>
        <dbReference type="Rhea" id="RHEA:57720"/>
        <dbReference type="ChEBI" id="CHEBI:15377"/>
        <dbReference type="ChEBI" id="CHEBI:15378"/>
        <dbReference type="ChEBI" id="CHEBI:30616"/>
        <dbReference type="ChEBI" id="CHEBI:43474"/>
        <dbReference type="ChEBI" id="CHEBI:456216"/>
        <dbReference type="EC" id="7.1.2.2"/>
    </reaction>
</comment>
<comment type="subunit">
    <text evidence="1">F-type ATPases have 2 components, CF(1) - the catalytic core - and CF(0) - the membrane proton channel. CF(1) has five subunits: alpha(3), beta(3), gamma(1), delta(1), epsilon(1). CF(0) has three main subunits: a(1), b(2) and c(9-12). The alpha and beta chains form an alternating ring which encloses part of the gamma chain. CF(1) is attached to CF(0) by a central stalk formed by the gamma and epsilon chains, while a peripheral stalk is formed by the delta and b chains.</text>
</comment>
<comment type="subcellular location">
    <subcellularLocation>
        <location evidence="1">Cell inner membrane</location>
        <topology evidence="1">Peripheral membrane protein</topology>
    </subcellularLocation>
</comment>
<comment type="similarity">
    <text evidence="1">Belongs to the ATPase alpha/beta chains family.</text>
</comment>
<protein>
    <recommendedName>
        <fullName evidence="1">ATP synthase subunit alpha</fullName>
        <ecNumber evidence="1">7.1.2.2</ecNumber>
    </recommendedName>
    <alternativeName>
        <fullName evidence="1">ATP synthase F1 sector subunit alpha</fullName>
    </alternativeName>
    <alternativeName>
        <fullName evidence="1">F-ATPase subunit alpha</fullName>
    </alternativeName>
</protein>